<comment type="function">
    <text evidence="2">One of the essential components for the initiation of protein synthesis. Protects formylmethionyl-tRNA from spontaneous hydrolysis and promotes its binding to the 30S ribosomal subunits. Also involved in the hydrolysis of GTP during the formation of the 70S ribosomal complex.</text>
</comment>
<comment type="subcellular location">
    <subcellularLocation>
        <location evidence="2">Cytoplasm</location>
    </subcellularLocation>
</comment>
<comment type="similarity">
    <text evidence="2">Belongs to the TRAFAC class translation factor GTPase superfamily. Classic translation factor GTPase family. IF-2 subfamily.</text>
</comment>
<protein>
    <recommendedName>
        <fullName evidence="2">Translation initiation factor IF-2</fullName>
    </recommendedName>
</protein>
<name>IF2_YERPG</name>
<feature type="chain" id="PRO_1000093848" description="Translation initiation factor IF-2">
    <location>
        <begin position="1"/>
        <end position="884"/>
    </location>
</feature>
<feature type="domain" description="tr-type G">
    <location>
        <begin position="383"/>
        <end position="552"/>
    </location>
</feature>
<feature type="region of interest" description="Disordered" evidence="3">
    <location>
        <begin position="93"/>
        <end position="288"/>
    </location>
</feature>
<feature type="region of interest" description="G1" evidence="1">
    <location>
        <begin position="392"/>
        <end position="399"/>
    </location>
</feature>
<feature type="region of interest" description="G2" evidence="1">
    <location>
        <begin position="417"/>
        <end position="421"/>
    </location>
</feature>
<feature type="region of interest" description="G3" evidence="1">
    <location>
        <begin position="438"/>
        <end position="441"/>
    </location>
</feature>
<feature type="region of interest" description="G4" evidence="1">
    <location>
        <begin position="492"/>
        <end position="495"/>
    </location>
</feature>
<feature type="region of interest" description="G5" evidence="1">
    <location>
        <begin position="528"/>
        <end position="530"/>
    </location>
</feature>
<feature type="compositionally biased region" description="Basic and acidic residues" evidence="3">
    <location>
        <begin position="99"/>
        <end position="209"/>
    </location>
</feature>
<feature type="compositionally biased region" description="Polar residues" evidence="3">
    <location>
        <begin position="216"/>
        <end position="229"/>
    </location>
</feature>
<feature type="compositionally biased region" description="Basic and acidic residues" evidence="3">
    <location>
        <begin position="231"/>
        <end position="246"/>
    </location>
</feature>
<feature type="compositionally biased region" description="Basic residues" evidence="3">
    <location>
        <begin position="247"/>
        <end position="261"/>
    </location>
</feature>
<feature type="compositionally biased region" description="Basic and acidic residues" evidence="3">
    <location>
        <begin position="262"/>
        <end position="275"/>
    </location>
</feature>
<feature type="binding site" evidence="2">
    <location>
        <begin position="392"/>
        <end position="399"/>
    </location>
    <ligand>
        <name>GTP</name>
        <dbReference type="ChEBI" id="CHEBI:37565"/>
    </ligand>
</feature>
<feature type="binding site" evidence="2">
    <location>
        <begin position="438"/>
        <end position="442"/>
    </location>
    <ligand>
        <name>GTP</name>
        <dbReference type="ChEBI" id="CHEBI:37565"/>
    </ligand>
</feature>
<feature type="binding site" evidence="2">
    <location>
        <begin position="492"/>
        <end position="495"/>
    </location>
    <ligand>
        <name>GTP</name>
        <dbReference type="ChEBI" id="CHEBI:37565"/>
    </ligand>
</feature>
<organism>
    <name type="scientific">Yersinia pestis bv. Antiqua (strain Angola)</name>
    <dbReference type="NCBI Taxonomy" id="349746"/>
    <lineage>
        <taxon>Bacteria</taxon>
        <taxon>Pseudomonadati</taxon>
        <taxon>Pseudomonadota</taxon>
        <taxon>Gammaproteobacteria</taxon>
        <taxon>Enterobacterales</taxon>
        <taxon>Yersiniaceae</taxon>
        <taxon>Yersinia</taxon>
    </lineage>
</organism>
<dbReference type="EMBL" id="CP000901">
    <property type="protein sequence ID" value="ABX84875.1"/>
    <property type="molecule type" value="Genomic_DNA"/>
</dbReference>
<dbReference type="RefSeq" id="WP_012230159.1">
    <property type="nucleotide sequence ID" value="NC_010159.1"/>
</dbReference>
<dbReference type="SMR" id="A9R5A3"/>
<dbReference type="KEGG" id="ypg:YpAngola_A3993"/>
<dbReference type="PATRIC" id="fig|349746.12.peg.717"/>
<dbReference type="GO" id="GO:0005829">
    <property type="term" value="C:cytosol"/>
    <property type="evidence" value="ECO:0007669"/>
    <property type="project" value="TreeGrafter"/>
</dbReference>
<dbReference type="GO" id="GO:0005525">
    <property type="term" value="F:GTP binding"/>
    <property type="evidence" value="ECO:0007669"/>
    <property type="project" value="UniProtKB-KW"/>
</dbReference>
<dbReference type="GO" id="GO:0003924">
    <property type="term" value="F:GTPase activity"/>
    <property type="evidence" value="ECO:0007669"/>
    <property type="project" value="UniProtKB-UniRule"/>
</dbReference>
<dbReference type="GO" id="GO:0097216">
    <property type="term" value="F:guanosine tetraphosphate binding"/>
    <property type="evidence" value="ECO:0007669"/>
    <property type="project" value="UniProtKB-ARBA"/>
</dbReference>
<dbReference type="GO" id="GO:0003743">
    <property type="term" value="F:translation initiation factor activity"/>
    <property type="evidence" value="ECO:0007669"/>
    <property type="project" value="UniProtKB-UniRule"/>
</dbReference>
<dbReference type="CDD" id="cd01887">
    <property type="entry name" value="IF2_eIF5B"/>
    <property type="match status" value="1"/>
</dbReference>
<dbReference type="CDD" id="cd03702">
    <property type="entry name" value="IF2_mtIF2_II"/>
    <property type="match status" value="1"/>
</dbReference>
<dbReference type="CDD" id="cd03692">
    <property type="entry name" value="mtIF2_IVc"/>
    <property type="match status" value="1"/>
</dbReference>
<dbReference type="FunFam" id="2.40.30.10:FF:000007">
    <property type="entry name" value="Translation initiation factor IF-2"/>
    <property type="match status" value="1"/>
</dbReference>
<dbReference type="FunFam" id="2.40.30.10:FF:000008">
    <property type="entry name" value="Translation initiation factor IF-2"/>
    <property type="match status" value="1"/>
</dbReference>
<dbReference type="FunFam" id="3.30.56.50:FF:000001">
    <property type="entry name" value="Translation initiation factor IF-2"/>
    <property type="match status" value="1"/>
</dbReference>
<dbReference type="FunFam" id="3.40.50.10050:FF:000001">
    <property type="entry name" value="Translation initiation factor IF-2"/>
    <property type="match status" value="1"/>
</dbReference>
<dbReference type="FunFam" id="3.40.50.300:FF:000019">
    <property type="entry name" value="Translation initiation factor IF-2"/>
    <property type="match status" value="1"/>
</dbReference>
<dbReference type="Gene3D" id="3.40.50.300">
    <property type="entry name" value="P-loop containing nucleotide triphosphate hydrolases"/>
    <property type="match status" value="1"/>
</dbReference>
<dbReference type="Gene3D" id="3.30.56.50">
    <property type="entry name" value="Putative DNA-binding domain, N-terminal subdomain of bacterial translation initiation factor IF2"/>
    <property type="match status" value="1"/>
</dbReference>
<dbReference type="Gene3D" id="2.40.30.10">
    <property type="entry name" value="Translation factors"/>
    <property type="match status" value="2"/>
</dbReference>
<dbReference type="Gene3D" id="3.40.50.10050">
    <property type="entry name" value="Translation initiation factor IF- 2, domain 3"/>
    <property type="match status" value="1"/>
</dbReference>
<dbReference type="HAMAP" id="MF_00100_B">
    <property type="entry name" value="IF_2_B"/>
    <property type="match status" value="1"/>
</dbReference>
<dbReference type="InterPro" id="IPR009061">
    <property type="entry name" value="DNA-bd_dom_put_sf"/>
</dbReference>
<dbReference type="InterPro" id="IPR053905">
    <property type="entry name" value="EF-G-like_DII"/>
</dbReference>
<dbReference type="InterPro" id="IPR004161">
    <property type="entry name" value="EFTu-like_2"/>
</dbReference>
<dbReference type="InterPro" id="IPR013575">
    <property type="entry name" value="IF2_assoc_dom_bac"/>
</dbReference>
<dbReference type="InterPro" id="IPR044145">
    <property type="entry name" value="IF2_II"/>
</dbReference>
<dbReference type="InterPro" id="IPR006847">
    <property type="entry name" value="IF2_N"/>
</dbReference>
<dbReference type="InterPro" id="IPR027417">
    <property type="entry name" value="P-loop_NTPase"/>
</dbReference>
<dbReference type="InterPro" id="IPR005225">
    <property type="entry name" value="Small_GTP-bd"/>
</dbReference>
<dbReference type="InterPro" id="IPR000795">
    <property type="entry name" value="T_Tr_GTP-bd_dom"/>
</dbReference>
<dbReference type="InterPro" id="IPR000178">
    <property type="entry name" value="TF_IF2_bacterial-like"/>
</dbReference>
<dbReference type="InterPro" id="IPR015760">
    <property type="entry name" value="TIF_IF2"/>
</dbReference>
<dbReference type="InterPro" id="IPR023115">
    <property type="entry name" value="TIF_IF2_dom3"/>
</dbReference>
<dbReference type="InterPro" id="IPR036925">
    <property type="entry name" value="TIF_IF2_dom3_sf"/>
</dbReference>
<dbReference type="InterPro" id="IPR009000">
    <property type="entry name" value="Transl_B-barrel_sf"/>
</dbReference>
<dbReference type="NCBIfam" id="TIGR00487">
    <property type="entry name" value="IF-2"/>
    <property type="match status" value="1"/>
</dbReference>
<dbReference type="NCBIfam" id="TIGR00231">
    <property type="entry name" value="small_GTP"/>
    <property type="match status" value="1"/>
</dbReference>
<dbReference type="PANTHER" id="PTHR43381:SF5">
    <property type="entry name" value="TR-TYPE G DOMAIN-CONTAINING PROTEIN"/>
    <property type="match status" value="1"/>
</dbReference>
<dbReference type="PANTHER" id="PTHR43381">
    <property type="entry name" value="TRANSLATION INITIATION FACTOR IF-2-RELATED"/>
    <property type="match status" value="1"/>
</dbReference>
<dbReference type="Pfam" id="PF22042">
    <property type="entry name" value="EF-G_D2"/>
    <property type="match status" value="1"/>
</dbReference>
<dbReference type="Pfam" id="PF00009">
    <property type="entry name" value="GTP_EFTU"/>
    <property type="match status" value="1"/>
</dbReference>
<dbReference type="Pfam" id="PF03144">
    <property type="entry name" value="GTP_EFTU_D2"/>
    <property type="match status" value="1"/>
</dbReference>
<dbReference type="Pfam" id="PF11987">
    <property type="entry name" value="IF-2"/>
    <property type="match status" value="1"/>
</dbReference>
<dbReference type="Pfam" id="PF08364">
    <property type="entry name" value="IF2_assoc"/>
    <property type="match status" value="1"/>
</dbReference>
<dbReference type="Pfam" id="PF04760">
    <property type="entry name" value="IF2_N"/>
    <property type="match status" value="2"/>
</dbReference>
<dbReference type="SUPFAM" id="SSF52156">
    <property type="entry name" value="Initiation factor IF2/eIF5b, domain 3"/>
    <property type="match status" value="1"/>
</dbReference>
<dbReference type="SUPFAM" id="SSF52540">
    <property type="entry name" value="P-loop containing nucleoside triphosphate hydrolases"/>
    <property type="match status" value="1"/>
</dbReference>
<dbReference type="SUPFAM" id="SSF46955">
    <property type="entry name" value="Putative DNA-binding domain"/>
    <property type="match status" value="1"/>
</dbReference>
<dbReference type="SUPFAM" id="SSF50447">
    <property type="entry name" value="Translation proteins"/>
    <property type="match status" value="2"/>
</dbReference>
<dbReference type="PROSITE" id="PS51722">
    <property type="entry name" value="G_TR_2"/>
    <property type="match status" value="1"/>
</dbReference>
<dbReference type="PROSITE" id="PS01176">
    <property type="entry name" value="IF2"/>
    <property type="match status" value="1"/>
</dbReference>
<keyword id="KW-0963">Cytoplasm</keyword>
<keyword id="KW-0342">GTP-binding</keyword>
<keyword id="KW-0396">Initiation factor</keyword>
<keyword id="KW-0547">Nucleotide-binding</keyword>
<keyword id="KW-0648">Protein biosynthesis</keyword>
<reference key="1">
    <citation type="journal article" date="2010" name="J. Bacteriol.">
        <title>Genome sequence of the deep-rooted Yersinia pestis strain Angola reveals new insights into the evolution and pangenome of the plague bacterium.</title>
        <authorList>
            <person name="Eppinger M."/>
            <person name="Worsham P.L."/>
            <person name="Nikolich M.P."/>
            <person name="Riley D.R."/>
            <person name="Sebastian Y."/>
            <person name="Mou S."/>
            <person name="Achtman M."/>
            <person name="Lindler L.E."/>
            <person name="Ravel J."/>
        </authorList>
    </citation>
    <scope>NUCLEOTIDE SEQUENCE [LARGE SCALE GENOMIC DNA]</scope>
    <source>
        <strain>Angola</strain>
    </source>
</reference>
<evidence type="ECO:0000250" key="1"/>
<evidence type="ECO:0000255" key="2">
    <source>
        <dbReference type="HAMAP-Rule" id="MF_00100"/>
    </source>
</evidence>
<evidence type="ECO:0000256" key="3">
    <source>
        <dbReference type="SAM" id="MobiDB-lite"/>
    </source>
</evidence>
<accession>A9R5A3</accession>
<gene>
    <name evidence="2" type="primary">infB</name>
    <name type="ordered locus">YpAngola_A3993</name>
</gene>
<proteinExistence type="inferred from homology"/>
<sequence length="884" mass="96608">MTDVTVKSLAAEIQTPVDRLVQQFADAGIKKSDVDSVTQQEKEILLAHLNREHGSVPNKLTLQRKTRSTLNIPSTGGKSKSVQIEVRKKRTYVNTPEAEQAKAEEQAQREAEATAQKIAEEKAKREAEEQAKREAAEKAKRQAAEKEKVTNQQTDEKTKPAQTDKARREAEAAELKRSVEEETRRKVEEDAKRVAEEARKMAAENEGKWPEPVAEQTESADYHVTTSQHARAAEDENDAKVEGDRRSRTRGGKATKQKKGNKLSESKADREEARAVGRKGKRKPSTLQQSFNKPVVAVNRDVVIGETVTVAELANKMAVKGSQVIKAMMKLGAMATINQVIDQETAQLVAEEIGHKVILRRENELEEALMSDRDIGVEAAAEHRAPVVTIMGHVDHGKTSLLDYIRSTKVASGEAGGITQHIGAYHVETENGMITFLDTPGHAAFTSMRARGAQATDIVVLVVAADDGVMPQTIEAIQHAKAANVPVVVAVNKIDKPEADPDRVKTELSQYGIQPEEWGGESQFINVSAKAGIGIDELLNAILLQAEVLELKAVRTGMANGVVIESFLDKGRGPVATVLVQQGTLNKGDIVLCGFEYGRVRAMRDELGRDITSAGPSIPVEILGLSSVPAAGDEVTVVRDEKKAREVALYRQGKFREVKLARQQKSKLENMFANMTEGEVSELNIVIKSDVQGSCEAICDSLEKLSTDEVKVRIVGSGVGGITETDATLAAASGAIILGFNVRADASARRVVETEGLDLRYYSVIYSLIDEVKQAMSGMLAPEYKQQIIGLAEVRDVFKSPKFGAIAGCMVTEGVIKRNNPIRVLRDNVVIYEGELESLRRFKDDVSEVRNGMECGIGVKNYNDVRTGDVIEVFEIIEIKRTIA</sequence>